<evidence type="ECO:0000250" key="1"/>
<evidence type="ECO:0000250" key="2">
    <source>
        <dbReference type="UniProtKB" id="O95989"/>
    </source>
</evidence>
<evidence type="ECO:0000250" key="3">
    <source>
        <dbReference type="UniProtKB" id="Q96G61"/>
    </source>
</evidence>
<evidence type="ECO:0000255" key="4">
    <source>
        <dbReference type="PROSITE-ProRule" id="PRU00794"/>
    </source>
</evidence>
<evidence type="ECO:0000256" key="5">
    <source>
        <dbReference type="SAM" id="MobiDB-lite"/>
    </source>
</evidence>
<evidence type="ECO:0000305" key="6"/>
<gene>
    <name evidence="3" type="primary">NUDT11</name>
    <name type="synonym">DIPP3B</name>
</gene>
<comment type="function">
    <text evidence="3">Cleaves a beta-phosphate from the diphosphate groups in PP-InsP5 (diphosphoinositol pentakisphosphate), suggesting that it may play a role in signal transduction. Also able to catalyze the hydrolysis of dinucleoside oligophosphates, with Ap6A and Ap5A being the preferred substrates. The major reaction products are ADP and p4a from Ap6A and ADP and ATP from Ap5A. Also able to hydrolyze 5-phosphoribose 1-diphosphate.</text>
</comment>
<comment type="catalytic activity">
    <reaction evidence="3">
        <text>diphospho-myo-inositol polyphosphate + H2O = myo-inositol polyphosphate + phosphate.</text>
        <dbReference type="EC" id="3.6.1.52"/>
    </reaction>
</comment>
<comment type="catalytic activity">
    <reaction evidence="3">
        <text>P(1),P(6)-bis(5'-adenosyl) hexaphosphate + H2O = adenosine 5'-pentaphosphate + AMP + 2 H(+)</text>
        <dbReference type="Rhea" id="RHEA:32047"/>
        <dbReference type="ChEBI" id="CHEBI:15377"/>
        <dbReference type="ChEBI" id="CHEBI:15378"/>
        <dbReference type="ChEBI" id="CHEBI:63740"/>
        <dbReference type="ChEBI" id="CHEBI:63813"/>
        <dbReference type="ChEBI" id="CHEBI:456215"/>
        <dbReference type="EC" id="3.6.1.60"/>
    </reaction>
</comment>
<comment type="catalytic activity">
    <reaction evidence="3">
        <text>P(1),P(5)-bis(5'-adenosyl) pentaphosphate + H2O = adenosine 5'-tetraphosphate + AMP + 2 H(+)</text>
        <dbReference type="Rhea" id="RHEA:32051"/>
        <dbReference type="ChEBI" id="CHEBI:15377"/>
        <dbReference type="ChEBI" id="CHEBI:15378"/>
        <dbReference type="ChEBI" id="CHEBI:58450"/>
        <dbReference type="ChEBI" id="CHEBI:62041"/>
        <dbReference type="ChEBI" id="CHEBI:456215"/>
        <dbReference type="EC" id="3.6.1.60"/>
    </reaction>
</comment>
<comment type="cofactor">
    <cofactor evidence="3">
        <name>Mg(2+)</name>
        <dbReference type="ChEBI" id="CHEBI:18420"/>
    </cofactor>
    <cofactor evidence="3">
        <name>Mn(2+)</name>
        <dbReference type="ChEBI" id="CHEBI:29035"/>
    </cofactor>
    <text evidence="3">Binds 3 Mg(2+) or Mn(2+) ions per subunit. Mn(2+) may be the true cofactor in vivo.</text>
</comment>
<comment type="subcellular location">
    <subcellularLocation>
        <location evidence="1">Cytoplasm</location>
    </subcellularLocation>
</comment>
<comment type="similarity">
    <text evidence="6">Belongs to the Nudix hydrolase family. DIPP subfamily.</text>
</comment>
<comment type="sequence caution" evidence="6">
    <conflict type="frameshift">
        <sequence resource="EMBL-CDS" id="AAX46684"/>
    </conflict>
</comment>
<accession>Q58CW0</accession>
<proteinExistence type="evidence at transcript level"/>
<sequence>MKCKPNQTRTYDPEGFKKRAACLCFRSEREDEVLLVSSSRYPDRWIVPGGGMEPEEEPGGAAVREVFEEAGVKGKLGRLLGNFEQNQDRKHRTYVYVLTVTEILEDWEDSVSIGRKREWFKVEDAIKVLQCHKPVHAEYLQKLKLGGSPTNGNSVAPSPPEGDP</sequence>
<feature type="chain" id="PRO_0000057064" description="Diphosphoinositol polyphosphate phosphohydrolase 3-beta">
    <location>
        <begin position="1"/>
        <end position="164"/>
    </location>
</feature>
<feature type="domain" description="Nudix hydrolase" evidence="4">
    <location>
        <begin position="17"/>
        <end position="144"/>
    </location>
</feature>
<feature type="region of interest" description="Disordered" evidence="5">
    <location>
        <begin position="144"/>
        <end position="164"/>
    </location>
</feature>
<feature type="short sequence motif" description="Nudix box">
    <location>
        <begin position="50"/>
        <end position="71"/>
    </location>
</feature>
<feature type="active site" description="Proton acceptor" evidence="1">
    <location>
        <position position="68"/>
    </location>
</feature>
<feature type="binding site" evidence="2">
    <location>
        <position position="9"/>
    </location>
    <ligand>
        <name>substrate</name>
    </ligand>
</feature>
<feature type="binding site" evidence="2">
    <location>
        <begin position="17"/>
        <end position="19"/>
    </location>
    <ligand>
        <name>substrate</name>
    </ligand>
</feature>
<feature type="binding site" evidence="2">
    <location>
        <begin position="38"/>
        <end position="40"/>
    </location>
    <ligand>
        <name>substrate</name>
    </ligand>
</feature>
<feature type="binding site" evidence="2">
    <location>
        <position position="49"/>
    </location>
    <ligand>
        <name>Mg(2+)</name>
        <dbReference type="ChEBI" id="CHEBI:18420"/>
        <label>1</label>
    </ligand>
</feature>
<feature type="binding site" evidence="2">
    <location>
        <position position="65"/>
    </location>
    <ligand>
        <name>Mg(2+)</name>
        <dbReference type="ChEBI" id="CHEBI:18420"/>
        <label>2</label>
    </ligand>
</feature>
<feature type="binding site" evidence="2">
    <location>
        <position position="65"/>
    </location>
    <ligand>
        <name>Mg(2+)</name>
        <dbReference type="ChEBI" id="CHEBI:18420"/>
        <label>3</label>
    </ligand>
</feature>
<feature type="binding site" evidence="2">
    <location>
        <position position="69"/>
    </location>
    <ligand>
        <name>Mg(2+)</name>
        <dbReference type="ChEBI" id="CHEBI:18420"/>
        <label>1</label>
    </ligand>
</feature>
<feature type="binding site" evidence="2">
    <location>
        <begin position="89"/>
        <end position="91"/>
    </location>
    <ligand>
        <name>substrate</name>
    </ligand>
</feature>
<feature type="binding site" evidence="2">
    <location>
        <position position="115"/>
    </location>
    <ligand>
        <name>substrate</name>
    </ligand>
</feature>
<feature type="binding site" evidence="2">
    <location>
        <position position="133"/>
    </location>
    <ligand>
        <name>substrate</name>
    </ligand>
</feature>
<protein>
    <recommendedName>
        <fullName evidence="3">Diphosphoinositol polyphosphate phosphohydrolase 3-beta</fullName>
        <shortName>DIPP-3-beta</shortName>
        <shortName>DIPP3-beta</shortName>
        <ecNumber evidence="3">3.6.1.52</ecNumber>
    </recommendedName>
    <alternativeName>
        <fullName>Diadenosine 5',5'''-P1,P6-hexaphosphate hydrolase 3-beta</fullName>
    </alternativeName>
    <alternativeName>
        <fullName>Diadenosine hexaphosphate hydrolase (AMP-forming)</fullName>
        <ecNumber evidence="3">3.6.1.60</ecNumber>
    </alternativeName>
    <alternativeName>
        <fullName>Nucleoside diphosphate-linked moiety X motif 11</fullName>
        <shortName>Nudix motif 11</shortName>
    </alternativeName>
</protein>
<name>NUD11_BOVIN</name>
<keyword id="KW-0963">Cytoplasm</keyword>
<keyword id="KW-0378">Hydrolase</keyword>
<keyword id="KW-0460">Magnesium</keyword>
<keyword id="KW-0464">Manganese</keyword>
<keyword id="KW-0479">Metal-binding</keyword>
<keyword id="KW-1185">Reference proteome</keyword>
<dbReference type="EC" id="3.6.1.52" evidence="3"/>
<dbReference type="EC" id="3.6.1.60" evidence="3"/>
<dbReference type="EMBL" id="BT021837">
    <property type="protein sequence ID" value="AAX46684.1"/>
    <property type="status" value="ALT_FRAME"/>
    <property type="molecule type" value="mRNA"/>
</dbReference>
<dbReference type="RefSeq" id="NP_001030565.2">
    <property type="nucleotide sequence ID" value="NM_001035488.2"/>
</dbReference>
<dbReference type="SMR" id="Q58CW0"/>
<dbReference type="FunCoup" id="Q58CW0">
    <property type="interactions" value="1087"/>
</dbReference>
<dbReference type="STRING" id="9913.ENSBTAP00000049572"/>
<dbReference type="PaxDb" id="9913-ENSBTAP00000049572"/>
<dbReference type="GeneID" id="616931"/>
<dbReference type="KEGG" id="bta:616931"/>
<dbReference type="CTD" id="170685"/>
<dbReference type="eggNOG" id="KOG2839">
    <property type="taxonomic scope" value="Eukaryota"/>
</dbReference>
<dbReference type="InParanoid" id="Q58CW0"/>
<dbReference type="OrthoDB" id="2011998at2759"/>
<dbReference type="Proteomes" id="UP000009136">
    <property type="component" value="Unplaced"/>
</dbReference>
<dbReference type="GO" id="GO:0005737">
    <property type="term" value="C:cytoplasm"/>
    <property type="evidence" value="ECO:0000318"/>
    <property type="project" value="GO_Central"/>
</dbReference>
<dbReference type="GO" id="GO:0005634">
    <property type="term" value="C:nucleus"/>
    <property type="evidence" value="ECO:0000318"/>
    <property type="project" value="GO_Central"/>
</dbReference>
<dbReference type="GO" id="GO:0034431">
    <property type="term" value="F:bis(5'-adenosyl)-hexaphosphatase activity"/>
    <property type="evidence" value="ECO:0000318"/>
    <property type="project" value="GO_Central"/>
</dbReference>
<dbReference type="GO" id="GO:0034432">
    <property type="term" value="F:bis(5'-adenosyl)-pentaphosphatase activity"/>
    <property type="evidence" value="ECO:0000318"/>
    <property type="project" value="GO_Central"/>
</dbReference>
<dbReference type="GO" id="GO:0008486">
    <property type="term" value="F:diphosphoinositol-polyphosphate diphosphatase activity"/>
    <property type="evidence" value="ECO:0000318"/>
    <property type="project" value="GO_Central"/>
</dbReference>
<dbReference type="GO" id="GO:0000298">
    <property type="term" value="F:endopolyphosphatase activity"/>
    <property type="evidence" value="ECO:0000318"/>
    <property type="project" value="GO_Central"/>
</dbReference>
<dbReference type="GO" id="GO:0046872">
    <property type="term" value="F:metal ion binding"/>
    <property type="evidence" value="ECO:0007669"/>
    <property type="project" value="UniProtKB-KW"/>
</dbReference>
<dbReference type="GO" id="GO:1901911">
    <property type="term" value="P:adenosine 5'-(hexahydrogen pentaphosphate) catabolic process"/>
    <property type="evidence" value="ECO:0000318"/>
    <property type="project" value="GO_Central"/>
</dbReference>
<dbReference type="GO" id="GO:1901909">
    <property type="term" value="P:diadenosine hexaphosphate catabolic process"/>
    <property type="evidence" value="ECO:0000318"/>
    <property type="project" value="GO_Central"/>
</dbReference>
<dbReference type="GO" id="GO:1901907">
    <property type="term" value="P:diadenosine pentaphosphate catabolic process"/>
    <property type="evidence" value="ECO:0000318"/>
    <property type="project" value="GO_Central"/>
</dbReference>
<dbReference type="GO" id="GO:0071543">
    <property type="term" value="P:diphosphoinositol polyphosphate metabolic process"/>
    <property type="evidence" value="ECO:0000318"/>
    <property type="project" value="GO_Central"/>
</dbReference>
<dbReference type="CDD" id="cd04666">
    <property type="entry name" value="NUDIX_DIPP2_like_Nudt4"/>
    <property type="match status" value="1"/>
</dbReference>
<dbReference type="FunFam" id="3.90.79.10:FF:000002">
    <property type="entry name" value="diphosphoinositol polyphosphate phosphohydrolase 1"/>
    <property type="match status" value="1"/>
</dbReference>
<dbReference type="Gene3D" id="3.90.79.10">
    <property type="entry name" value="Nucleoside Triphosphate Pyrophosphohydrolase"/>
    <property type="match status" value="1"/>
</dbReference>
<dbReference type="InterPro" id="IPR047198">
    <property type="entry name" value="DDP-like_NUDIX"/>
</dbReference>
<dbReference type="InterPro" id="IPR015797">
    <property type="entry name" value="NUDIX_hydrolase-like_dom_sf"/>
</dbReference>
<dbReference type="InterPro" id="IPR020084">
    <property type="entry name" value="NUDIX_hydrolase_CS"/>
</dbReference>
<dbReference type="InterPro" id="IPR000086">
    <property type="entry name" value="NUDIX_hydrolase_dom"/>
</dbReference>
<dbReference type="PANTHER" id="PTHR12629">
    <property type="entry name" value="DIPHOSPHOINOSITOL POLYPHOSPHATE PHOSPHOHYDROLASE"/>
    <property type="match status" value="1"/>
</dbReference>
<dbReference type="PANTHER" id="PTHR12629:SF35">
    <property type="entry name" value="DIPHOSPHOINOSITOL POLYPHOSPHATE PHOSPHOHYDROLASE 3-BETA"/>
    <property type="match status" value="1"/>
</dbReference>
<dbReference type="Pfam" id="PF00293">
    <property type="entry name" value="NUDIX"/>
    <property type="match status" value="1"/>
</dbReference>
<dbReference type="SUPFAM" id="SSF55811">
    <property type="entry name" value="Nudix"/>
    <property type="match status" value="1"/>
</dbReference>
<dbReference type="PROSITE" id="PS51462">
    <property type="entry name" value="NUDIX"/>
    <property type="match status" value="1"/>
</dbReference>
<dbReference type="PROSITE" id="PS00893">
    <property type="entry name" value="NUDIX_BOX"/>
    <property type="match status" value="1"/>
</dbReference>
<organism>
    <name type="scientific">Bos taurus</name>
    <name type="common">Bovine</name>
    <dbReference type="NCBI Taxonomy" id="9913"/>
    <lineage>
        <taxon>Eukaryota</taxon>
        <taxon>Metazoa</taxon>
        <taxon>Chordata</taxon>
        <taxon>Craniata</taxon>
        <taxon>Vertebrata</taxon>
        <taxon>Euteleostomi</taxon>
        <taxon>Mammalia</taxon>
        <taxon>Eutheria</taxon>
        <taxon>Laurasiatheria</taxon>
        <taxon>Artiodactyla</taxon>
        <taxon>Ruminantia</taxon>
        <taxon>Pecora</taxon>
        <taxon>Bovidae</taxon>
        <taxon>Bovinae</taxon>
        <taxon>Bos</taxon>
    </lineage>
</organism>
<reference key="1">
    <citation type="journal article" date="2005" name="BMC Genomics">
        <title>Characterization of 954 bovine full-CDS cDNA sequences.</title>
        <authorList>
            <person name="Harhay G.P."/>
            <person name="Sonstegard T.S."/>
            <person name="Keele J.W."/>
            <person name="Heaton M.P."/>
            <person name="Clawson M.L."/>
            <person name="Snelling W.M."/>
            <person name="Wiedmann R.T."/>
            <person name="Van Tassell C.P."/>
            <person name="Smith T.P.L."/>
        </authorList>
    </citation>
    <scope>NUCLEOTIDE SEQUENCE [LARGE SCALE MRNA]</scope>
</reference>